<reference key="1">
    <citation type="journal article" date="2001" name="Mol. Microbiol.">
        <title>A glutamate decarboxylase system protects Listeria monocytogenes in gastric fluid.</title>
        <authorList>
            <person name="Cotter P.D."/>
            <person name="Gahan C.G.M."/>
            <person name="Hill C."/>
        </authorList>
    </citation>
    <scope>NUCLEOTIDE SEQUENCE [GENOMIC DNA]</scope>
    <source>
        <strain>EGD5</strain>
        <strain>LO28 / Serovar 1/2c</strain>
    </source>
</reference>
<reference key="2">
    <citation type="journal article" date="2001" name="Science">
        <title>Comparative genomics of Listeria species.</title>
        <authorList>
            <person name="Glaser P."/>
            <person name="Frangeul L."/>
            <person name="Buchrieser C."/>
            <person name="Rusniok C."/>
            <person name="Amend A."/>
            <person name="Baquero F."/>
            <person name="Berche P."/>
            <person name="Bloecker H."/>
            <person name="Brandt P."/>
            <person name="Chakraborty T."/>
            <person name="Charbit A."/>
            <person name="Chetouani F."/>
            <person name="Couve E."/>
            <person name="de Daruvar A."/>
            <person name="Dehoux P."/>
            <person name="Domann E."/>
            <person name="Dominguez-Bernal G."/>
            <person name="Duchaud E."/>
            <person name="Durant L."/>
            <person name="Dussurget O."/>
            <person name="Entian K.-D."/>
            <person name="Fsihi H."/>
            <person name="Garcia-del Portillo F."/>
            <person name="Garrido P."/>
            <person name="Gautier L."/>
            <person name="Goebel W."/>
            <person name="Gomez-Lopez N."/>
            <person name="Hain T."/>
            <person name="Hauf J."/>
            <person name="Jackson D."/>
            <person name="Jones L.-M."/>
            <person name="Kaerst U."/>
            <person name="Kreft J."/>
            <person name="Kuhn M."/>
            <person name="Kunst F."/>
            <person name="Kurapkat G."/>
            <person name="Madueno E."/>
            <person name="Maitournam A."/>
            <person name="Mata Vicente J."/>
            <person name="Ng E."/>
            <person name="Nedjari H."/>
            <person name="Nordsiek G."/>
            <person name="Novella S."/>
            <person name="de Pablos B."/>
            <person name="Perez-Diaz J.-C."/>
            <person name="Purcell R."/>
            <person name="Remmel B."/>
            <person name="Rose M."/>
            <person name="Schlueter T."/>
            <person name="Simoes N."/>
            <person name="Tierrez A."/>
            <person name="Vazquez-Boland J.-A."/>
            <person name="Voss H."/>
            <person name="Wehland J."/>
            <person name="Cossart P."/>
        </authorList>
    </citation>
    <scope>NUCLEOTIDE SEQUENCE [LARGE SCALE GENOMIC DNA]</scope>
    <source>
        <strain>ATCC BAA-679 / EGD-e</strain>
    </source>
</reference>
<sequence length="464" mass="53543">MLYSKENKESYLEPVFGSSAEDRDIPKYTLGKEPLEPRIAYRLVKDELLDEGSARQNLATFCQTYMEDEATKLMSETLEKNAIDKSEYPRTAELENRCVNIIADLWHAPKDQKFMGTSTIGSSEACMLGGMAMKFAWRKRAEKLGLDIYAKKPNLVISSGYQVCWEKFCVYWDIDMRVVPMDKEHMQLNTDQVLDYVDEYTIGVVGILGITYTGRYDDIYALNEKLEEYNSKTDYKVYIHVDAASGGFFTPFVEPDIIWDFRLKNVISINTSGHKYGLVYPGIGWVLWKDESYLPEELIFKVSYLGGEMPTMQINFSRSASHIIGQYYNFLRYGFEGYRTIHQKTSDVAQYLAHAVEQTGYFDIFNDGSHLPIVCYKLKDDANVNWTLYDLADRLQMRGWQVPAYPLPKSLENIIIQRYVCRADLGFNMAEEFIQDFQASIQELNNAHILFHDTQQSGVHGFTH</sequence>
<proteinExistence type="inferred from homology"/>
<protein>
    <recommendedName>
        <fullName>Glutamate decarboxylase beta</fullName>
        <shortName>GAD-beta</shortName>
        <ecNumber>4.1.1.15</ecNumber>
    </recommendedName>
</protein>
<evidence type="ECO:0000250" key="1"/>
<evidence type="ECO:0000305" key="2"/>
<feature type="chain" id="PRO_0000146990" description="Glutamate decarboxylase beta">
    <location>
        <begin position="1"/>
        <end position="464"/>
    </location>
</feature>
<feature type="modified residue" description="N6-(pyridoxal phosphate)lysine" evidence="1">
    <location>
        <position position="275"/>
    </location>
</feature>
<feature type="sequence variant" description="In strain: LO28.">
    <original>A</original>
    <variation>P</variation>
    <location>
        <position position="92"/>
    </location>
</feature>
<feature type="sequence variant" description="In strain: LO28.">
    <original>E</original>
    <variation>D</variation>
    <location>
        <position position="124"/>
    </location>
</feature>
<feature type="sequence variant" description="In strain: EGD5.">
    <original>F</original>
    <variation>L</variation>
    <location>
        <position position="261"/>
    </location>
</feature>
<feature type="sequence variant" description="In strain: EGD5.">
    <original>C</original>
    <variation>R</variation>
    <location>
        <position position="375"/>
    </location>
</feature>
<feature type="sequence variant" description="In strain: LO28.">
    <original>DD</original>
    <variation>TT</variation>
    <location>
        <begin position="380"/>
        <end position="381"/>
    </location>
</feature>
<organism>
    <name type="scientific">Listeria monocytogenes serovar 1/2a (strain ATCC BAA-679 / EGD-e)</name>
    <dbReference type="NCBI Taxonomy" id="169963"/>
    <lineage>
        <taxon>Bacteria</taxon>
        <taxon>Bacillati</taxon>
        <taxon>Bacillota</taxon>
        <taxon>Bacilli</taxon>
        <taxon>Bacillales</taxon>
        <taxon>Listeriaceae</taxon>
        <taxon>Listeria</taxon>
    </lineage>
</organism>
<name>DCEB_LISMO</name>
<keyword id="KW-0210">Decarboxylase</keyword>
<keyword id="KW-0456">Lyase</keyword>
<keyword id="KW-0663">Pyridoxal phosphate</keyword>
<keyword id="KW-1185">Reference proteome</keyword>
<dbReference type="EC" id="4.1.1.15"/>
<dbReference type="EMBL" id="AF309077">
    <property type="protein sequence ID" value="AAG22562.1"/>
    <property type="molecule type" value="Genomic_DNA"/>
</dbReference>
<dbReference type="EMBL" id="AF329447">
    <property type="protein sequence ID" value="AAK17187.1"/>
    <property type="molecule type" value="Genomic_DNA"/>
</dbReference>
<dbReference type="EMBL" id="AL591983">
    <property type="protein sequence ID" value="CAD00441.1"/>
    <property type="molecule type" value="Genomic_DNA"/>
</dbReference>
<dbReference type="PIR" id="AC1370">
    <property type="entry name" value="AC1370"/>
</dbReference>
<dbReference type="RefSeq" id="NP_465886.1">
    <property type="nucleotide sequence ID" value="NC_003210.1"/>
</dbReference>
<dbReference type="RefSeq" id="WP_009931286.1">
    <property type="nucleotide sequence ID" value="NZ_CP149495.1"/>
</dbReference>
<dbReference type="SMR" id="Q9EYW9"/>
<dbReference type="STRING" id="169963.gene:17595054"/>
<dbReference type="PaxDb" id="169963-lmo2363"/>
<dbReference type="EnsemblBacteria" id="CAD00441">
    <property type="protein sequence ID" value="CAD00441"/>
    <property type="gene ID" value="CAD00441"/>
</dbReference>
<dbReference type="GeneID" id="985123"/>
<dbReference type="KEGG" id="lmo:lmo2363"/>
<dbReference type="PATRIC" id="fig|169963.11.peg.2421"/>
<dbReference type="eggNOG" id="COG0076">
    <property type="taxonomic scope" value="Bacteria"/>
</dbReference>
<dbReference type="HOGENOM" id="CLU_019582_2_1_9"/>
<dbReference type="OrthoDB" id="9803665at2"/>
<dbReference type="PhylomeDB" id="Q9EYW9"/>
<dbReference type="BioCyc" id="LMON169963:LMO2363-MONOMER"/>
<dbReference type="Proteomes" id="UP000000817">
    <property type="component" value="Chromosome"/>
</dbReference>
<dbReference type="GO" id="GO:0005829">
    <property type="term" value="C:cytosol"/>
    <property type="evidence" value="ECO:0000318"/>
    <property type="project" value="GO_Central"/>
</dbReference>
<dbReference type="GO" id="GO:0004058">
    <property type="term" value="F:aromatic-L-amino-acid decarboxylase activity"/>
    <property type="evidence" value="ECO:0007669"/>
    <property type="project" value="UniProtKB-ARBA"/>
</dbReference>
<dbReference type="GO" id="GO:0004351">
    <property type="term" value="F:glutamate decarboxylase activity"/>
    <property type="evidence" value="ECO:0000318"/>
    <property type="project" value="GO_Central"/>
</dbReference>
<dbReference type="GO" id="GO:0030170">
    <property type="term" value="F:pyridoxal phosphate binding"/>
    <property type="evidence" value="ECO:0007669"/>
    <property type="project" value="InterPro"/>
</dbReference>
<dbReference type="GO" id="GO:0006538">
    <property type="term" value="P:glutamate catabolic process"/>
    <property type="evidence" value="ECO:0000318"/>
    <property type="project" value="GO_Central"/>
</dbReference>
<dbReference type="CDD" id="cd06450">
    <property type="entry name" value="DOPA_deC_like"/>
    <property type="match status" value="1"/>
</dbReference>
<dbReference type="FunFam" id="3.40.640.10:FF:000017">
    <property type="entry name" value="Glutamate decarboxylase"/>
    <property type="match status" value="1"/>
</dbReference>
<dbReference type="FunFam" id="3.90.1150.160:FF:000003">
    <property type="entry name" value="Glutamate decarboxylase"/>
    <property type="match status" value="1"/>
</dbReference>
<dbReference type="FunFam" id="4.10.280.50:FF:000001">
    <property type="entry name" value="Glutamate decarboxylase"/>
    <property type="match status" value="1"/>
</dbReference>
<dbReference type="Gene3D" id="3.90.1150.160">
    <property type="match status" value="1"/>
</dbReference>
<dbReference type="Gene3D" id="4.10.280.50">
    <property type="match status" value="1"/>
</dbReference>
<dbReference type="Gene3D" id="3.40.640.10">
    <property type="entry name" value="Type I PLP-dependent aspartate aminotransferase-like (Major domain)"/>
    <property type="match status" value="1"/>
</dbReference>
<dbReference type="InterPro" id="IPR010107">
    <property type="entry name" value="Glutamate_decarboxylase"/>
</dbReference>
<dbReference type="InterPro" id="IPR002129">
    <property type="entry name" value="PyrdxlP-dep_de-COase"/>
</dbReference>
<dbReference type="InterPro" id="IPR015424">
    <property type="entry name" value="PyrdxlP-dep_Trfase"/>
</dbReference>
<dbReference type="InterPro" id="IPR015421">
    <property type="entry name" value="PyrdxlP-dep_Trfase_major"/>
</dbReference>
<dbReference type="NCBIfam" id="TIGR01788">
    <property type="entry name" value="Glu-decarb-GAD"/>
    <property type="match status" value="1"/>
</dbReference>
<dbReference type="PANTHER" id="PTHR43321">
    <property type="entry name" value="GLUTAMATE DECARBOXYLASE"/>
    <property type="match status" value="1"/>
</dbReference>
<dbReference type="PANTHER" id="PTHR43321:SF3">
    <property type="entry name" value="GLUTAMATE DECARBOXYLASE"/>
    <property type="match status" value="1"/>
</dbReference>
<dbReference type="Pfam" id="PF00282">
    <property type="entry name" value="Pyridoxal_deC"/>
    <property type="match status" value="1"/>
</dbReference>
<dbReference type="SUPFAM" id="SSF53383">
    <property type="entry name" value="PLP-dependent transferases"/>
    <property type="match status" value="1"/>
</dbReference>
<accession>Q9EYW9</accession>
<accession>Q8Y4S0</accession>
<accession>Q9AGQ0</accession>
<gene>
    <name type="primary">gadB</name>
    <name type="ordered locus">lmo2363</name>
</gene>
<comment type="function">
    <text>Converts internalized glutamate to GABA and increases the internal pH. Involved in glutamate-dependent acid resistance in gastric fluid.</text>
</comment>
<comment type="catalytic activity">
    <reaction>
        <text>L-glutamate + H(+) = 4-aminobutanoate + CO2</text>
        <dbReference type="Rhea" id="RHEA:17785"/>
        <dbReference type="ChEBI" id="CHEBI:15378"/>
        <dbReference type="ChEBI" id="CHEBI:16526"/>
        <dbReference type="ChEBI" id="CHEBI:29985"/>
        <dbReference type="ChEBI" id="CHEBI:59888"/>
        <dbReference type="EC" id="4.1.1.15"/>
    </reaction>
</comment>
<comment type="cofactor">
    <cofactor evidence="1">
        <name>pyridoxal 5'-phosphate</name>
        <dbReference type="ChEBI" id="CHEBI:597326"/>
    </cofactor>
</comment>
<comment type="similarity">
    <text evidence="2">Belongs to the group II decarboxylase family.</text>
</comment>